<gene>
    <name evidence="1" type="primary">flhD</name>
</gene>
<name>FLHD_ENTS2</name>
<organism>
    <name type="scientific">Enterobacter sp. (strain 22)</name>
    <dbReference type="NCBI Taxonomy" id="151779"/>
    <lineage>
        <taxon>Bacteria</taxon>
        <taxon>Pseudomonadati</taxon>
        <taxon>Pseudomonadota</taxon>
        <taxon>Gammaproteobacteria</taxon>
        <taxon>Enterobacterales</taxon>
        <taxon>Enterobacteriaceae</taxon>
        <taxon>Enterobacter</taxon>
    </lineage>
</organism>
<proteinExistence type="inferred from homology"/>
<evidence type="ECO:0000255" key="1">
    <source>
        <dbReference type="HAMAP-Rule" id="MF_00725"/>
    </source>
</evidence>
<accession>Q937H8</accession>
<feature type="chain" id="PRO_0000182716" description="Flagellar transcriptional regulator FlhD">
    <location>
        <begin position="1"/>
        <end position="116"/>
    </location>
</feature>
<feature type="disulfide bond" description="Interchain" evidence="1">
    <location>
        <position position="65"/>
    </location>
</feature>
<reference key="1">
    <citation type="journal article" date="2001" name="Appl. Environ. Microbiol.">
        <title>Control of bacterial motility by environmental factors in polarly flagellated and peritrichous bacteria isolated from lake Baikal.</title>
        <authorList>
            <person name="Soutourina O.A."/>
            <person name="Semenova E.A."/>
            <person name="Parfenova V.V."/>
            <person name="Danchin A."/>
            <person name="Bertin P."/>
        </authorList>
    </citation>
    <scope>NUCLEOTIDE SEQUENCE [GENOMIC DNA]</scope>
</reference>
<dbReference type="EMBL" id="AJ308469">
    <property type="protein sequence ID" value="CAC69397.1"/>
    <property type="molecule type" value="Genomic_DNA"/>
</dbReference>
<dbReference type="SMR" id="Q937H8"/>
<dbReference type="GO" id="GO:0005737">
    <property type="term" value="C:cytoplasm"/>
    <property type="evidence" value="ECO:0007669"/>
    <property type="project" value="UniProtKB-SubCell"/>
</dbReference>
<dbReference type="GO" id="GO:0003677">
    <property type="term" value="F:DNA binding"/>
    <property type="evidence" value="ECO:0007669"/>
    <property type="project" value="UniProtKB-UniRule"/>
</dbReference>
<dbReference type="GO" id="GO:0044780">
    <property type="term" value="P:bacterial-type flagellum assembly"/>
    <property type="evidence" value="ECO:0007669"/>
    <property type="project" value="InterPro"/>
</dbReference>
<dbReference type="GO" id="GO:0045893">
    <property type="term" value="P:positive regulation of DNA-templated transcription"/>
    <property type="evidence" value="ECO:0007669"/>
    <property type="project" value="InterPro"/>
</dbReference>
<dbReference type="GO" id="GO:1902208">
    <property type="term" value="P:regulation of bacterial-type flagellum assembly"/>
    <property type="evidence" value="ECO:0007669"/>
    <property type="project" value="UniProtKB-UniRule"/>
</dbReference>
<dbReference type="Gene3D" id="1.10.4000.10">
    <property type="entry name" value="Flagellar transcriptional activator FlhD"/>
    <property type="match status" value="1"/>
</dbReference>
<dbReference type="HAMAP" id="MF_00725">
    <property type="entry name" value="FlhD"/>
    <property type="match status" value="1"/>
</dbReference>
<dbReference type="InterPro" id="IPR023559">
    <property type="entry name" value="Flagellar_FlhD"/>
</dbReference>
<dbReference type="InterPro" id="IPR036194">
    <property type="entry name" value="FlhD_sf"/>
</dbReference>
<dbReference type="NCBIfam" id="NF002783">
    <property type="entry name" value="PRK02909.1-1"/>
    <property type="match status" value="1"/>
</dbReference>
<dbReference type="Pfam" id="PF05247">
    <property type="entry name" value="FlhD"/>
    <property type="match status" value="1"/>
</dbReference>
<dbReference type="SUPFAM" id="SSF63592">
    <property type="entry name" value="Flagellar transcriptional activator FlhD"/>
    <property type="match status" value="1"/>
</dbReference>
<keyword id="KW-0010">Activator</keyword>
<keyword id="KW-1005">Bacterial flagellum biogenesis</keyword>
<keyword id="KW-0963">Cytoplasm</keyword>
<keyword id="KW-1015">Disulfide bond</keyword>
<keyword id="KW-0238">DNA-binding</keyword>
<keyword id="KW-0804">Transcription</keyword>
<keyword id="KW-0805">Transcription regulation</keyword>
<protein>
    <recommendedName>
        <fullName evidence="1">Flagellar transcriptional regulator FlhD</fullName>
    </recommendedName>
</protein>
<sequence>MHTSEMLKHVYDINLSYLLLAQRLISQDKPSAMFRLGISEEMATTLGGLTLPQMVKLAETNQLVCQFRFDSHQTITRLTQDSRVDDLQQIHTGILLSTRLLTEVSQTDEVARKKRA</sequence>
<comment type="function">
    <text evidence="1">Functions in complex with FlhC as a master transcriptional regulator that regulates transcription of several flagellar and non-flagellar operons by binding to their promoter region. Activates expression of class 2 flagellar genes, including fliA, which is a flagellum-specific sigma factor that turns on the class 3 genes. Also regulates genes whose products function in a variety of physiological pathways.</text>
</comment>
<comment type="subunit">
    <text evidence="1">Homodimer; disulfide-linked. Forms a heterohexamer composed of two FlhC and four FlhD subunits. Each FlhC binds a FlhD dimer, forming a heterotrimer, and a hexamer assembles by dimerization of two heterotrimers.</text>
</comment>
<comment type="subcellular location">
    <subcellularLocation>
        <location evidence="1">Cytoplasm</location>
    </subcellularLocation>
</comment>
<comment type="domain">
    <text evidence="1">The C-terminal region contains a putative helix-turn-helix (HTH) motif, suggesting that this region may bind DNA.</text>
</comment>
<comment type="similarity">
    <text evidence="1">Belongs to the FlhD family.</text>
</comment>